<sequence length="175" mass="20266">MGALVIRGIRNFNLENRAEREISKMKPSVAPRHPSTNSLLREQISLYPEVKGEIARKDEKLLSFLKDVYVDSKDPVSSLQVKAAETCQEPKEFRLPKDHHFDMINIKSIPKGKISIVEALTLLNNHKLFPETWTAEKIMQEYQLEQKDVNSLLKYFVTFEVEIFPPEDKKAIRSK</sequence>
<accession>Q9P032</accession>
<accession>B2R4J5</accession>
<organism>
    <name type="scientific">Homo sapiens</name>
    <name type="common">Human</name>
    <dbReference type="NCBI Taxonomy" id="9606"/>
    <lineage>
        <taxon>Eukaryota</taxon>
        <taxon>Metazoa</taxon>
        <taxon>Chordata</taxon>
        <taxon>Craniata</taxon>
        <taxon>Vertebrata</taxon>
        <taxon>Euteleostomi</taxon>
        <taxon>Mammalia</taxon>
        <taxon>Eutheria</taxon>
        <taxon>Euarchontoglires</taxon>
        <taxon>Primates</taxon>
        <taxon>Haplorrhini</taxon>
        <taxon>Catarrhini</taxon>
        <taxon>Hominidae</taxon>
        <taxon>Homo</taxon>
    </lineage>
</organism>
<feature type="initiator methionine" description="Removed" evidence="6">
    <location>
        <position position="1"/>
    </location>
</feature>
<feature type="chain" id="PRO_0000220988" description="NADH dehydrogenase [ubiquinone] 1 alpha subcomplex assembly factor 4">
    <location>
        <begin position="2"/>
        <end position="175"/>
    </location>
</feature>
<feature type="modified residue" description="Phosphoserine" evidence="13">
    <location>
        <position position="35"/>
    </location>
</feature>
<feature type="lipid moiety-binding region" description="N-myristoyl glycine" evidence="6">
    <location>
        <position position="2"/>
    </location>
</feature>
<feature type="sequence variant" id="VAR_081426" description="In MC1DN15; results in altered complex I assembly; dbSNP:rs1554197721." evidence="7">
    <original>A</original>
    <variation>P</variation>
    <location>
        <position position="3"/>
    </location>
</feature>
<feature type="sequence variant" id="VAR_044329" description="In MC1DN15; dbSNP:rs63751061." evidence="4">
    <original>L</original>
    <variation>P</variation>
    <location>
        <position position="65"/>
    </location>
</feature>
<feature type="mutagenesis site" description="Reduces interaction with calmodulin. Does not promote MMP-9 secretion." evidence="3">
    <original>K</original>
    <variation>A</variation>
    <location>
        <position position="73"/>
    </location>
</feature>
<reference key="1">
    <citation type="journal article" date="2000" name="Genome Res.">
        <title>Cloning and functional analysis of cDNAs with open reading frames for 300 previously undefined genes expressed in CD34+ hematopoietic stem/progenitor cells.</title>
        <authorList>
            <person name="Zhang Q.-H."/>
            <person name="Ye M."/>
            <person name="Wu X.-Y."/>
            <person name="Ren S.-X."/>
            <person name="Zhao M."/>
            <person name="Zhao C.-J."/>
            <person name="Fu G."/>
            <person name="Shen Y."/>
            <person name="Fan H.-Y."/>
            <person name="Lu G."/>
            <person name="Zhong M."/>
            <person name="Xu X.-R."/>
            <person name="Han Z.-G."/>
            <person name="Zhang J.-W."/>
            <person name="Tao J."/>
            <person name="Huang Q.-H."/>
            <person name="Zhou J."/>
            <person name="Hu G.-X."/>
            <person name="Gu J."/>
            <person name="Chen S.-J."/>
            <person name="Chen Z."/>
        </authorList>
    </citation>
    <scope>NUCLEOTIDE SEQUENCE [LARGE SCALE MRNA]</scope>
    <source>
        <tissue>Umbilical cord blood</tissue>
    </source>
</reference>
<reference key="2">
    <citation type="submission" date="1998-04" db="EMBL/GenBank/DDBJ databases">
        <authorList>
            <person name="Mao Y.M."/>
            <person name="Xie Y."/>
            <person name="Lin Q."/>
            <person name="Li Y."/>
            <person name="Dai J.L."/>
            <person name="Ying K."/>
        </authorList>
    </citation>
    <scope>NUCLEOTIDE SEQUENCE [LARGE SCALE MRNA]</scope>
    <source>
        <tissue>Fetal brain</tissue>
    </source>
</reference>
<reference key="3">
    <citation type="journal article" date="2004" name="Nat. Genet.">
        <title>Complete sequencing and characterization of 21,243 full-length human cDNAs.</title>
        <authorList>
            <person name="Ota T."/>
            <person name="Suzuki Y."/>
            <person name="Nishikawa T."/>
            <person name="Otsuki T."/>
            <person name="Sugiyama T."/>
            <person name="Irie R."/>
            <person name="Wakamatsu A."/>
            <person name="Hayashi K."/>
            <person name="Sato H."/>
            <person name="Nagai K."/>
            <person name="Kimura K."/>
            <person name="Makita H."/>
            <person name="Sekine M."/>
            <person name="Obayashi M."/>
            <person name="Nishi T."/>
            <person name="Shibahara T."/>
            <person name="Tanaka T."/>
            <person name="Ishii S."/>
            <person name="Yamamoto J."/>
            <person name="Saito K."/>
            <person name="Kawai Y."/>
            <person name="Isono Y."/>
            <person name="Nakamura Y."/>
            <person name="Nagahari K."/>
            <person name="Murakami K."/>
            <person name="Yasuda T."/>
            <person name="Iwayanagi T."/>
            <person name="Wagatsuma M."/>
            <person name="Shiratori A."/>
            <person name="Sudo H."/>
            <person name="Hosoiri T."/>
            <person name="Kaku Y."/>
            <person name="Kodaira H."/>
            <person name="Kondo H."/>
            <person name="Sugawara M."/>
            <person name="Takahashi M."/>
            <person name="Kanda K."/>
            <person name="Yokoi T."/>
            <person name="Furuya T."/>
            <person name="Kikkawa E."/>
            <person name="Omura Y."/>
            <person name="Abe K."/>
            <person name="Kamihara K."/>
            <person name="Katsuta N."/>
            <person name="Sato K."/>
            <person name="Tanikawa M."/>
            <person name="Yamazaki M."/>
            <person name="Ninomiya K."/>
            <person name="Ishibashi T."/>
            <person name="Yamashita H."/>
            <person name="Murakawa K."/>
            <person name="Fujimori K."/>
            <person name="Tanai H."/>
            <person name="Kimata M."/>
            <person name="Watanabe M."/>
            <person name="Hiraoka S."/>
            <person name="Chiba Y."/>
            <person name="Ishida S."/>
            <person name="Ono Y."/>
            <person name="Takiguchi S."/>
            <person name="Watanabe S."/>
            <person name="Yosida M."/>
            <person name="Hotuta T."/>
            <person name="Kusano J."/>
            <person name="Kanehori K."/>
            <person name="Takahashi-Fujii A."/>
            <person name="Hara H."/>
            <person name="Tanase T.-O."/>
            <person name="Nomura Y."/>
            <person name="Togiya S."/>
            <person name="Komai F."/>
            <person name="Hara R."/>
            <person name="Takeuchi K."/>
            <person name="Arita M."/>
            <person name="Imose N."/>
            <person name="Musashino K."/>
            <person name="Yuuki H."/>
            <person name="Oshima A."/>
            <person name="Sasaki N."/>
            <person name="Aotsuka S."/>
            <person name="Yoshikawa Y."/>
            <person name="Matsunawa H."/>
            <person name="Ichihara T."/>
            <person name="Shiohata N."/>
            <person name="Sano S."/>
            <person name="Moriya S."/>
            <person name="Momiyama H."/>
            <person name="Satoh N."/>
            <person name="Takami S."/>
            <person name="Terashima Y."/>
            <person name="Suzuki O."/>
            <person name="Nakagawa S."/>
            <person name="Senoh A."/>
            <person name="Mizoguchi H."/>
            <person name="Goto Y."/>
            <person name="Shimizu F."/>
            <person name="Wakebe H."/>
            <person name="Hishigaki H."/>
            <person name="Watanabe T."/>
            <person name="Sugiyama A."/>
            <person name="Takemoto M."/>
            <person name="Kawakami B."/>
            <person name="Yamazaki M."/>
            <person name="Watanabe K."/>
            <person name="Kumagai A."/>
            <person name="Itakura S."/>
            <person name="Fukuzumi Y."/>
            <person name="Fujimori Y."/>
            <person name="Komiyama M."/>
            <person name="Tashiro H."/>
            <person name="Tanigami A."/>
            <person name="Fujiwara T."/>
            <person name="Ono T."/>
            <person name="Yamada K."/>
            <person name="Fujii Y."/>
            <person name="Ozaki K."/>
            <person name="Hirao M."/>
            <person name="Ohmori Y."/>
            <person name="Kawabata A."/>
            <person name="Hikiji T."/>
            <person name="Kobatake N."/>
            <person name="Inagaki H."/>
            <person name="Ikema Y."/>
            <person name="Okamoto S."/>
            <person name="Okitani R."/>
            <person name="Kawakami T."/>
            <person name="Noguchi S."/>
            <person name="Itoh T."/>
            <person name="Shigeta K."/>
            <person name="Senba T."/>
            <person name="Matsumura K."/>
            <person name="Nakajima Y."/>
            <person name="Mizuno T."/>
            <person name="Morinaga M."/>
            <person name="Sasaki M."/>
            <person name="Togashi T."/>
            <person name="Oyama M."/>
            <person name="Hata H."/>
            <person name="Watanabe M."/>
            <person name="Komatsu T."/>
            <person name="Mizushima-Sugano J."/>
            <person name="Satoh T."/>
            <person name="Shirai Y."/>
            <person name="Takahashi Y."/>
            <person name="Nakagawa K."/>
            <person name="Okumura K."/>
            <person name="Nagase T."/>
            <person name="Nomura N."/>
            <person name="Kikuchi H."/>
            <person name="Masuho Y."/>
            <person name="Yamashita R."/>
            <person name="Nakai K."/>
            <person name="Yada T."/>
            <person name="Nakamura Y."/>
            <person name="Ohara O."/>
            <person name="Isogai T."/>
            <person name="Sugano S."/>
        </authorList>
    </citation>
    <scope>NUCLEOTIDE SEQUENCE [LARGE SCALE MRNA]</scope>
    <source>
        <tissue>Hippocampus</tissue>
    </source>
</reference>
<reference key="4">
    <citation type="journal article" date="2003" name="Nature">
        <title>The DNA sequence and analysis of human chromosome 6.</title>
        <authorList>
            <person name="Mungall A.J."/>
            <person name="Palmer S.A."/>
            <person name="Sims S.K."/>
            <person name="Edwards C.A."/>
            <person name="Ashurst J.L."/>
            <person name="Wilming L."/>
            <person name="Jones M.C."/>
            <person name="Horton R."/>
            <person name="Hunt S.E."/>
            <person name="Scott C.E."/>
            <person name="Gilbert J.G.R."/>
            <person name="Clamp M.E."/>
            <person name="Bethel G."/>
            <person name="Milne S."/>
            <person name="Ainscough R."/>
            <person name="Almeida J.P."/>
            <person name="Ambrose K.D."/>
            <person name="Andrews T.D."/>
            <person name="Ashwell R.I.S."/>
            <person name="Babbage A.K."/>
            <person name="Bagguley C.L."/>
            <person name="Bailey J."/>
            <person name="Banerjee R."/>
            <person name="Barker D.J."/>
            <person name="Barlow K.F."/>
            <person name="Bates K."/>
            <person name="Beare D.M."/>
            <person name="Beasley H."/>
            <person name="Beasley O."/>
            <person name="Bird C.P."/>
            <person name="Blakey S.E."/>
            <person name="Bray-Allen S."/>
            <person name="Brook J."/>
            <person name="Brown A.J."/>
            <person name="Brown J.Y."/>
            <person name="Burford D.C."/>
            <person name="Burrill W."/>
            <person name="Burton J."/>
            <person name="Carder C."/>
            <person name="Carter N.P."/>
            <person name="Chapman J.C."/>
            <person name="Clark S.Y."/>
            <person name="Clark G."/>
            <person name="Clee C.M."/>
            <person name="Clegg S."/>
            <person name="Cobley V."/>
            <person name="Collier R.E."/>
            <person name="Collins J.E."/>
            <person name="Colman L.K."/>
            <person name="Corby N.R."/>
            <person name="Coville G.J."/>
            <person name="Culley K.M."/>
            <person name="Dhami P."/>
            <person name="Davies J."/>
            <person name="Dunn M."/>
            <person name="Earthrowl M.E."/>
            <person name="Ellington A.E."/>
            <person name="Evans K.A."/>
            <person name="Faulkner L."/>
            <person name="Francis M.D."/>
            <person name="Frankish A."/>
            <person name="Frankland J."/>
            <person name="French L."/>
            <person name="Garner P."/>
            <person name="Garnett J."/>
            <person name="Ghori M.J."/>
            <person name="Gilby L.M."/>
            <person name="Gillson C.J."/>
            <person name="Glithero R.J."/>
            <person name="Grafham D.V."/>
            <person name="Grant M."/>
            <person name="Gribble S."/>
            <person name="Griffiths C."/>
            <person name="Griffiths M.N.D."/>
            <person name="Hall R."/>
            <person name="Halls K.S."/>
            <person name="Hammond S."/>
            <person name="Harley J.L."/>
            <person name="Hart E.A."/>
            <person name="Heath P.D."/>
            <person name="Heathcott R."/>
            <person name="Holmes S.J."/>
            <person name="Howden P.J."/>
            <person name="Howe K.L."/>
            <person name="Howell G.R."/>
            <person name="Huckle E."/>
            <person name="Humphray S.J."/>
            <person name="Humphries M.D."/>
            <person name="Hunt A.R."/>
            <person name="Johnson C.M."/>
            <person name="Joy A.A."/>
            <person name="Kay M."/>
            <person name="Keenan S.J."/>
            <person name="Kimberley A.M."/>
            <person name="King A."/>
            <person name="Laird G.K."/>
            <person name="Langford C."/>
            <person name="Lawlor S."/>
            <person name="Leongamornlert D.A."/>
            <person name="Leversha M."/>
            <person name="Lloyd C.R."/>
            <person name="Lloyd D.M."/>
            <person name="Loveland J.E."/>
            <person name="Lovell J."/>
            <person name="Martin S."/>
            <person name="Mashreghi-Mohammadi M."/>
            <person name="Maslen G.L."/>
            <person name="Matthews L."/>
            <person name="McCann O.T."/>
            <person name="McLaren S.J."/>
            <person name="McLay K."/>
            <person name="McMurray A."/>
            <person name="Moore M.J.F."/>
            <person name="Mullikin J.C."/>
            <person name="Niblett D."/>
            <person name="Nickerson T."/>
            <person name="Novik K.L."/>
            <person name="Oliver K."/>
            <person name="Overton-Larty E.K."/>
            <person name="Parker A."/>
            <person name="Patel R."/>
            <person name="Pearce A.V."/>
            <person name="Peck A.I."/>
            <person name="Phillimore B.J.C.T."/>
            <person name="Phillips S."/>
            <person name="Plumb R.W."/>
            <person name="Porter K.M."/>
            <person name="Ramsey Y."/>
            <person name="Ranby S.A."/>
            <person name="Rice C.M."/>
            <person name="Ross M.T."/>
            <person name="Searle S.M."/>
            <person name="Sehra H.K."/>
            <person name="Sheridan E."/>
            <person name="Skuce C.D."/>
            <person name="Smith S."/>
            <person name="Smith M."/>
            <person name="Spraggon L."/>
            <person name="Squares S.L."/>
            <person name="Steward C.A."/>
            <person name="Sycamore N."/>
            <person name="Tamlyn-Hall G."/>
            <person name="Tester J."/>
            <person name="Theaker A.J."/>
            <person name="Thomas D.W."/>
            <person name="Thorpe A."/>
            <person name="Tracey A."/>
            <person name="Tromans A."/>
            <person name="Tubby B."/>
            <person name="Wall M."/>
            <person name="Wallis J.M."/>
            <person name="West A.P."/>
            <person name="White S.S."/>
            <person name="Whitehead S.L."/>
            <person name="Whittaker H."/>
            <person name="Wild A."/>
            <person name="Willey D.J."/>
            <person name="Wilmer T.E."/>
            <person name="Wood J.M."/>
            <person name="Wray P.W."/>
            <person name="Wyatt J.C."/>
            <person name="Young L."/>
            <person name="Younger R.M."/>
            <person name="Bentley D.R."/>
            <person name="Coulson A."/>
            <person name="Durbin R.M."/>
            <person name="Hubbard T."/>
            <person name="Sulston J.E."/>
            <person name="Dunham I."/>
            <person name="Rogers J."/>
            <person name="Beck S."/>
        </authorList>
    </citation>
    <scope>NUCLEOTIDE SEQUENCE [LARGE SCALE GENOMIC DNA]</scope>
</reference>
<reference key="5">
    <citation type="submission" date="2005-09" db="EMBL/GenBank/DDBJ databases">
        <authorList>
            <person name="Mural R.J."/>
            <person name="Istrail S."/>
            <person name="Sutton G.G."/>
            <person name="Florea L."/>
            <person name="Halpern A.L."/>
            <person name="Mobarry C.M."/>
            <person name="Lippert R."/>
            <person name="Walenz B."/>
            <person name="Shatkay H."/>
            <person name="Dew I."/>
            <person name="Miller J.R."/>
            <person name="Flanigan M.J."/>
            <person name="Edwards N.J."/>
            <person name="Bolanos R."/>
            <person name="Fasulo D."/>
            <person name="Halldorsson B.V."/>
            <person name="Hannenhalli S."/>
            <person name="Turner R."/>
            <person name="Yooseph S."/>
            <person name="Lu F."/>
            <person name="Nusskern D.R."/>
            <person name="Shue B.C."/>
            <person name="Zheng X.H."/>
            <person name="Zhong F."/>
            <person name="Delcher A.L."/>
            <person name="Huson D.H."/>
            <person name="Kravitz S.A."/>
            <person name="Mouchard L."/>
            <person name="Reinert K."/>
            <person name="Remington K.A."/>
            <person name="Clark A.G."/>
            <person name="Waterman M.S."/>
            <person name="Eichler E.E."/>
            <person name="Adams M.D."/>
            <person name="Hunkapiller M.W."/>
            <person name="Myers E.W."/>
            <person name="Venter J.C."/>
        </authorList>
    </citation>
    <scope>NUCLEOTIDE SEQUENCE [LARGE SCALE GENOMIC DNA]</scope>
</reference>
<reference key="6">
    <citation type="journal article" date="2004" name="Genome Res.">
        <title>The status, quality, and expansion of the NIH full-length cDNA project: the Mammalian Gene Collection (MGC).</title>
        <authorList>
            <consortium name="The MGC Project Team"/>
        </authorList>
    </citation>
    <scope>NUCLEOTIDE SEQUENCE [LARGE SCALE MRNA]</scope>
    <source>
        <tissue>Bone</tissue>
    </source>
</reference>
<reference key="7">
    <citation type="journal article" date="2004" name="Cancer Res.">
        <title>Identification of HRPAP20: a novel phosphoprotein that enhances growth and survival in hormone-responsive tumor cells.</title>
        <authorList>
            <person name="Karp C.M."/>
            <person name="Pan H."/>
            <person name="Zhang M."/>
            <person name="Buckley D.J."/>
            <person name="Schuler L.A."/>
            <person name="Buckley A.R."/>
        </authorList>
    </citation>
    <scope>FUNCTION</scope>
    <scope>INDUCTION</scope>
</reference>
<reference key="8">
    <citation type="journal article" date="2007" name="Oncogene">
        <title>HRPAP20: a novel calmodulin-binding protein that increases breast cancer cell invasion.</title>
        <authorList>
            <person name="Karp C.M."/>
            <person name="Shukla M.N."/>
            <person name="Buckley D.J."/>
            <person name="Buckley A.R."/>
        </authorList>
    </citation>
    <scope>FUNCTION</scope>
    <scope>INTERACTION WITH CALMODULIN</scope>
    <scope>MUTAGENESIS OF LYS-73</scope>
</reference>
<reference key="9">
    <citation type="journal article" date="2008" name="Am. J. Hum. Genet.">
        <title>C6ORF66 is an assembly factor of mitochondrial complex I.</title>
        <authorList>
            <person name="Saada A."/>
            <person name="Edvardson S."/>
            <person name="Rapoport M."/>
            <person name="Shaag A."/>
            <person name="Amry K."/>
            <person name="Miller C."/>
            <person name="Lorberboum-Galski H."/>
            <person name="Elpeleg O."/>
        </authorList>
    </citation>
    <scope>FUNCTION</scope>
    <scope>SUBCELLULAR LOCATION</scope>
    <scope>INVOLVEMENT IN MC1DN15</scope>
    <scope>VARIANT MC1DN15 PRO-65</scope>
</reference>
<reference key="10">
    <citation type="journal article" date="2009" name="Am. J. Hum. Genet.">
        <title>Mutations in NDUFAF3 (C3ORF60), encoding an NDUFAF4 (C6ORF66)-interacting complex I assembly protein, cause fatal neonatal mitochondrial disease.</title>
        <authorList>
            <person name="Saada A."/>
            <person name="Vogel R.O."/>
            <person name="Hoefs S.J."/>
            <person name="van den Brand M.A."/>
            <person name="Wessels H.J."/>
            <person name="Willems P.H."/>
            <person name="Venselaar H."/>
            <person name="Shaag A."/>
            <person name="Barghuti F."/>
            <person name="Reish O."/>
            <person name="Shohat M."/>
            <person name="Huynen M.A."/>
            <person name="Smeitink J.A.M."/>
            <person name="van den Heuvel L.P."/>
            <person name="Nijtmans L.G."/>
        </authorList>
    </citation>
    <scope>INTERACTION WITH NDUFAF3</scope>
</reference>
<reference key="11">
    <citation type="journal article" date="2011" name="BMC Syst. Biol.">
        <title>Initial characterization of the human central proteome.</title>
        <authorList>
            <person name="Burkard T.R."/>
            <person name="Planyavsky M."/>
            <person name="Kaupe I."/>
            <person name="Breitwieser F.P."/>
            <person name="Buerckstuemmer T."/>
            <person name="Bennett K.L."/>
            <person name="Superti-Furga G."/>
            <person name="Colinge J."/>
        </authorList>
    </citation>
    <scope>IDENTIFICATION BY MASS SPECTROMETRY [LARGE SCALE ANALYSIS]</scope>
</reference>
<reference key="12">
    <citation type="journal article" date="2013" name="J. Proteome Res.">
        <title>Toward a comprehensive characterization of a human cancer cell phosphoproteome.</title>
        <authorList>
            <person name="Zhou H."/>
            <person name="Di Palma S."/>
            <person name="Preisinger C."/>
            <person name="Peng M."/>
            <person name="Polat A.N."/>
            <person name="Heck A.J."/>
            <person name="Mohammed S."/>
        </authorList>
    </citation>
    <scope>PHOSPHORYLATION [LARGE SCALE ANALYSIS] AT SER-35</scope>
    <scope>IDENTIFICATION BY MASS SPECTROMETRY [LARGE SCALE ANALYSIS]</scope>
    <source>
        <tissue>Erythroleukemia</tissue>
    </source>
</reference>
<reference key="13">
    <citation type="journal article" date="2014" name="Nat. Commun.">
        <title>Global profiling of co- and post-translationally N-myristoylated proteomes in human cells.</title>
        <authorList>
            <person name="Thinon E."/>
            <person name="Serwa R.A."/>
            <person name="Broncel M."/>
            <person name="Brannigan J.A."/>
            <person name="Brassat U."/>
            <person name="Wright M.H."/>
            <person name="Heal W.P."/>
            <person name="Wilkinson A.J."/>
            <person name="Mann D.J."/>
            <person name="Tate E.W."/>
        </authorList>
    </citation>
    <scope>MYRISTOYLATION AT GLY-2</scope>
    <scope>CLEAVAGE OF INITIATOR METHIONINE</scope>
    <scope>IDENTIFICATION BY MASS SPECTROMETRY</scope>
</reference>
<reference key="14">
    <citation type="journal article" date="2015" name="Proteomics">
        <title>N-terminome analysis of the human mitochondrial proteome.</title>
        <authorList>
            <person name="Vaca Jacome A.S."/>
            <person name="Rabilloud T."/>
            <person name="Schaeffer-Reiss C."/>
            <person name="Rompais M."/>
            <person name="Ayoub D."/>
            <person name="Lane L."/>
            <person name="Bairoch A."/>
            <person name="Van Dorsselaer A."/>
            <person name="Carapito C."/>
        </authorList>
    </citation>
    <scope>IDENTIFICATION BY MASS SPECTROMETRY [LARGE SCALE ANALYSIS]</scope>
</reference>
<reference key="15">
    <citation type="journal article" date="2021" name="Virus Genes">
        <title>The host cellular protein Ndufaf4 interacts with the vesicular stomatitis virus M protein and affects viral propagation.</title>
        <authorList>
            <person name="Pan W."/>
            <person name="Shen Z."/>
            <person name="Wang H."/>
            <person name="He H."/>
        </authorList>
    </citation>
    <scope>INTERACTION WITH VSIV PROTEIN M (MICROBIAL INFECTION)</scope>
</reference>
<reference key="16">
    <citation type="journal article" date="2017" name="Eur. J. Hum. Genet.">
        <title>NDUFAF4 variants are associated with Leigh syndrome and cause a specific mitochondrial complex I assembly defect.</title>
        <authorList>
            <person name="Baertling F."/>
            <person name="Sanchez-Caballero L."/>
            <person name="van den Brand M.A.M."/>
            <person name="Wintjes L.T."/>
            <person name="Brink M."/>
            <person name="van den Brandt F.A."/>
            <person name="Wilson C."/>
            <person name="Rodenburg R.J.T."/>
            <person name="Nijtmans L.G.J."/>
        </authorList>
    </citation>
    <scope>FUNCTION</scope>
    <scope>INVOLVEMENT IN MC1DN15</scope>
    <scope>VARIANT MC1DN15 PRO-3</scope>
    <scope>CHARACTERIZATION OF VARIANT MC1DN15 PRO-3</scope>
</reference>
<name>NDUF4_HUMAN</name>
<proteinExistence type="evidence at protein level"/>
<gene>
    <name evidence="12" type="primary">NDUFAF4</name>
    <name evidence="10" type="synonym">C6orf66</name>
    <name evidence="9" type="synonym">HRPAP20</name>
    <name type="ORF">HSPC125</name>
    <name type="ORF">My013</name>
</gene>
<comment type="function">
    <text evidence="2 3 4 7">Involved in the assembly of mitochondrial NADH:ubiquinone oxidoreductase complex (complex I) (PubMed:18179882, PubMed:28853723). May be involved in cell proliferation and survival of hormone-dependent tumor cells. May be a regulator of breast tumor cell invasion.</text>
</comment>
<comment type="subunit">
    <text evidence="3 5">Binds calmodulin. Interacts with NDUFAF3.</text>
</comment>
<comment type="subunit">
    <text evidence="8">(Microbial infection) Interacts with the vesicular stomatitis virus matrix protein/M; the interaction inhibits viral propagation.</text>
</comment>
<comment type="interaction">
    <interactant intactId="EBI-2606839">
        <id>Q9P032</id>
    </interactant>
    <interactant intactId="EBI-747754">
        <id>P28799</id>
        <label>GRN</label>
    </interactant>
    <organismsDiffer>false</organismsDiffer>
    <experiments>3</experiments>
</comment>
<comment type="interaction">
    <interactant intactId="EBI-2606839">
        <id>Q9P032</id>
    </interactant>
    <interactant intactId="EBI-2114801">
        <id>Q9BU61</id>
        <label>NDUFAF3</label>
    </interactant>
    <organismsDiffer>false</organismsDiffer>
    <experiments>12</experiments>
</comment>
<comment type="interaction">
    <interactant intactId="EBI-2606839">
        <id>Q9P032</id>
    </interactant>
    <interactant intactId="EBI-10298649">
        <id>Q9BU61-2</id>
        <label>NDUFAF3</label>
    </interactant>
    <organismsDiffer>false</organismsDiffer>
    <experiments>8</experiments>
</comment>
<comment type="interaction">
    <interactant intactId="EBI-2606839">
        <id>Q9P032</id>
    </interactant>
    <interactant intactId="EBI-720609">
        <id>O76024</id>
        <label>WFS1</label>
    </interactant>
    <organismsDiffer>false</organismsDiffer>
    <experiments>3</experiments>
</comment>
<comment type="subcellular location">
    <subcellularLocation>
        <location evidence="4">Mitochondrion</location>
    </subcellularLocation>
    <subcellularLocation>
        <location evidence="11">Membrane</location>
        <topology evidence="11">Lipid-anchor</topology>
    </subcellularLocation>
</comment>
<comment type="induction">
    <text evidence="2">Expression is low in quiescent cells and is induced in exponentially proliferating cultures. Expression is also induced when prolactin is added to stationary cells. Induced by dietary differentiating agents such as butyrate and retinoic acid.</text>
</comment>
<comment type="PTM">
    <text evidence="1">Phosphorylated on serine. Prolactin stimulate serine phosphorylation (By similarity).</text>
</comment>
<comment type="disease" evidence="4 7">
    <disease id="DI-05412">
        <name>Mitochondrial complex I deficiency, nuclear type 15</name>
        <acronym>MC1DN15</acronym>
        <description>A form of mitochondrial complex I deficiency, the most common biochemical signature of mitochondrial disorders, a group of highly heterogeneous conditions characterized by defective oxidative phosphorylation, which collectively affects 1 in 5-10000 live births. Clinical disorders have variable severity, ranging from lethal neonatal disease to adult-onset neurodegenerative disorders. Phenotypes include macrocephaly with progressive leukodystrophy, non-specific encephalopathy, cardiomyopathy, myopathy, liver disease, Leigh syndrome, Leber hereditary optic neuropathy, and some forms of Parkinson disease. MC1DN15 transmission pattern is consistent with autosomal recessive inheritance.</description>
        <dbReference type="MIM" id="618237"/>
    </disease>
    <text>The disease is caused by variants affecting the gene represented in this entry.</text>
</comment>
<comment type="similarity">
    <text evidence="11">Belongs to the NDUFAF4 family.</text>
</comment>
<protein>
    <recommendedName>
        <fullName>NADH dehydrogenase [ubiquinone] 1 alpha subcomplex assembly factor 4</fullName>
    </recommendedName>
    <alternativeName>
        <fullName evidence="9">Hormone-regulated proliferation-associated protein of 20 kDa</fullName>
    </alternativeName>
</protein>
<keyword id="KW-0112">Calmodulin-binding</keyword>
<keyword id="KW-0225">Disease variant</keyword>
<keyword id="KW-0945">Host-virus interaction</keyword>
<keyword id="KW-0449">Lipoprotein</keyword>
<keyword id="KW-0472">Membrane</keyword>
<keyword id="KW-0496">Mitochondrion</keyword>
<keyword id="KW-0519">Myristate</keyword>
<keyword id="KW-0597">Phosphoprotein</keyword>
<keyword id="KW-1274">Primary mitochondrial disease</keyword>
<keyword id="KW-1267">Proteomics identification</keyword>
<keyword id="KW-1185">Reference proteome</keyword>
<evidence type="ECO:0000250" key="1"/>
<evidence type="ECO:0000269" key="2">
    <source>
    </source>
</evidence>
<evidence type="ECO:0000269" key="3">
    <source>
    </source>
</evidence>
<evidence type="ECO:0000269" key="4">
    <source>
    </source>
</evidence>
<evidence type="ECO:0000269" key="5">
    <source>
    </source>
</evidence>
<evidence type="ECO:0000269" key="6">
    <source>
    </source>
</evidence>
<evidence type="ECO:0000269" key="7">
    <source>
    </source>
</evidence>
<evidence type="ECO:0000269" key="8">
    <source>
    </source>
</evidence>
<evidence type="ECO:0000303" key="9">
    <source>
    </source>
</evidence>
<evidence type="ECO:0000303" key="10">
    <source>
    </source>
</evidence>
<evidence type="ECO:0000305" key="11"/>
<evidence type="ECO:0000312" key="12">
    <source>
        <dbReference type="HGNC" id="HGNC:21034"/>
    </source>
</evidence>
<evidence type="ECO:0007744" key="13">
    <source>
    </source>
</evidence>
<dbReference type="EMBL" id="AF161474">
    <property type="protein sequence ID" value="AAF29089.1"/>
    <property type="molecule type" value="mRNA"/>
</dbReference>
<dbReference type="EMBL" id="AF060508">
    <property type="protein sequence ID" value="AAG43126.1"/>
    <property type="molecule type" value="mRNA"/>
</dbReference>
<dbReference type="EMBL" id="AK311850">
    <property type="protein sequence ID" value="BAG34792.1"/>
    <property type="molecule type" value="mRNA"/>
</dbReference>
<dbReference type="EMBL" id="AL159985">
    <property type="status" value="NOT_ANNOTATED_CDS"/>
    <property type="molecule type" value="Genomic_DNA"/>
</dbReference>
<dbReference type="EMBL" id="CH471051">
    <property type="protein sequence ID" value="EAW48501.1"/>
    <property type="molecule type" value="Genomic_DNA"/>
</dbReference>
<dbReference type="EMBL" id="BC039464">
    <property type="protein sequence ID" value="AAH39464.1"/>
    <property type="molecule type" value="mRNA"/>
</dbReference>
<dbReference type="CCDS" id="CCDS5037.1"/>
<dbReference type="RefSeq" id="NP_054884.1">
    <property type="nucleotide sequence ID" value="NM_014165.4"/>
</dbReference>
<dbReference type="SMR" id="Q9P032"/>
<dbReference type="BioGRID" id="118848">
    <property type="interactions" value="198"/>
</dbReference>
<dbReference type="FunCoup" id="Q9P032">
    <property type="interactions" value="1074"/>
</dbReference>
<dbReference type="IntAct" id="Q9P032">
    <property type="interactions" value="80"/>
</dbReference>
<dbReference type="MINT" id="Q9P032"/>
<dbReference type="STRING" id="9606.ENSP00000358272"/>
<dbReference type="BindingDB" id="Q9P032"/>
<dbReference type="ChEMBL" id="CHEMBL2363065"/>
<dbReference type="DrugCentral" id="Q9P032"/>
<dbReference type="GlyGen" id="Q9P032">
    <property type="glycosylation" value="1 site, 1 O-linked glycan (1 site)"/>
</dbReference>
<dbReference type="iPTMnet" id="Q9P032"/>
<dbReference type="PhosphoSitePlus" id="Q9P032"/>
<dbReference type="SwissPalm" id="Q9P032"/>
<dbReference type="BioMuta" id="NDUFAF4"/>
<dbReference type="DMDM" id="30912745"/>
<dbReference type="jPOST" id="Q9P032"/>
<dbReference type="MassIVE" id="Q9P032"/>
<dbReference type="PaxDb" id="9606-ENSP00000358272"/>
<dbReference type="PeptideAtlas" id="Q9P032"/>
<dbReference type="ProteomicsDB" id="83539"/>
<dbReference type="Pumba" id="Q9P032"/>
<dbReference type="TopDownProteomics" id="Q9P032"/>
<dbReference type="Antibodypedia" id="48392">
    <property type="antibodies" value="123 antibodies from 27 providers"/>
</dbReference>
<dbReference type="DNASU" id="29078"/>
<dbReference type="Ensembl" id="ENST00000316149.8">
    <property type="protein sequence ID" value="ENSP00000358272.4"/>
    <property type="gene ID" value="ENSG00000123545.6"/>
</dbReference>
<dbReference type="GeneID" id="29078"/>
<dbReference type="KEGG" id="hsa:29078"/>
<dbReference type="MANE-Select" id="ENST00000316149.8">
    <property type="protein sequence ID" value="ENSP00000358272.4"/>
    <property type="RefSeq nucleotide sequence ID" value="NM_014165.4"/>
    <property type="RefSeq protein sequence ID" value="NP_054884.1"/>
</dbReference>
<dbReference type="UCSC" id="uc003pow.4">
    <property type="organism name" value="human"/>
</dbReference>
<dbReference type="AGR" id="HGNC:21034"/>
<dbReference type="CTD" id="29078"/>
<dbReference type="DisGeNET" id="29078"/>
<dbReference type="GeneCards" id="NDUFAF4"/>
<dbReference type="HGNC" id="HGNC:21034">
    <property type="gene designation" value="NDUFAF4"/>
</dbReference>
<dbReference type="HPA" id="ENSG00000123545">
    <property type="expression patterns" value="Low tissue specificity"/>
</dbReference>
<dbReference type="MalaCards" id="NDUFAF4"/>
<dbReference type="MIM" id="611776">
    <property type="type" value="gene"/>
</dbReference>
<dbReference type="MIM" id="618237">
    <property type="type" value="phenotype"/>
</dbReference>
<dbReference type="neXtProt" id="NX_Q9P032"/>
<dbReference type="OpenTargets" id="ENSG00000123545"/>
<dbReference type="Orphanet" id="2609">
    <property type="disease" value="Isolated complex I deficiency"/>
</dbReference>
<dbReference type="PharmGKB" id="PA164723808"/>
<dbReference type="VEuPathDB" id="HostDB:ENSG00000123545"/>
<dbReference type="eggNOG" id="KOG4481">
    <property type="taxonomic scope" value="Eukaryota"/>
</dbReference>
<dbReference type="GeneTree" id="ENSGT00390000001627"/>
<dbReference type="HOGENOM" id="CLU_054693_2_0_1"/>
<dbReference type="InParanoid" id="Q9P032"/>
<dbReference type="OMA" id="IPDQKYK"/>
<dbReference type="OrthoDB" id="2434756at2759"/>
<dbReference type="PAN-GO" id="Q9P032">
    <property type="GO annotations" value="2 GO annotations based on evolutionary models"/>
</dbReference>
<dbReference type="PhylomeDB" id="Q9P032"/>
<dbReference type="TreeFam" id="TF323532"/>
<dbReference type="PathwayCommons" id="Q9P032"/>
<dbReference type="Reactome" id="R-HSA-6799198">
    <property type="pathway name" value="Complex I biogenesis"/>
</dbReference>
<dbReference type="SignaLink" id="Q9P032"/>
<dbReference type="BioGRID-ORCS" id="29078">
    <property type="hits" value="121 hits in 1157 CRISPR screens"/>
</dbReference>
<dbReference type="ChiTaRS" id="NDUFAF4">
    <property type="organism name" value="human"/>
</dbReference>
<dbReference type="GenomeRNAi" id="29078"/>
<dbReference type="Pharos" id="Q9P032">
    <property type="development level" value="Tclin"/>
</dbReference>
<dbReference type="PRO" id="PR:Q9P032"/>
<dbReference type="Proteomes" id="UP000005640">
    <property type="component" value="Chromosome 6"/>
</dbReference>
<dbReference type="RNAct" id="Q9P032">
    <property type="molecule type" value="protein"/>
</dbReference>
<dbReference type="Bgee" id="ENSG00000123545">
    <property type="expression patterns" value="Expressed in pons and 200 other cell types or tissues"/>
</dbReference>
<dbReference type="GO" id="GO:0005829">
    <property type="term" value="C:cytosol"/>
    <property type="evidence" value="ECO:0000314"/>
    <property type="project" value="HPA"/>
</dbReference>
<dbReference type="GO" id="GO:0005743">
    <property type="term" value="C:mitochondrial inner membrane"/>
    <property type="evidence" value="ECO:0000304"/>
    <property type="project" value="Reactome"/>
</dbReference>
<dbReference type="GO" id="GO:0031966">
    <property type="term" value="C:mitochondrial membrane"/>
    <property type="evidence" value="ECO:0000314"/>
    <property type="project" value="UniProtKB"/>
</dbReference>
<dbReference type="GO" id="GO:0005739">
    <property type="term" value="C:mitochondrion"/>
    <property type="evidence" value="ECO:0000314"/>
    <property type="project" value="UniProtKB"/>
</dbReference>
<dbReference type="GO" id="GO:0005516">
    <property type="term" value="F:calmodulin binding"/>
    <property type="evidence" value="ECO:0007669"/>
    <property type="project" value="UniProtKB-KW"/>
</dbReference>
<dbReference type="GO" id="GO:0051607">
    <property type="term" value="P:defense response to virus"/>
    <property type="evidence" value="ECO:0000315"/>
    <property type="project" value="UniProtKB"/>
</dbReference>
<dbReference type="GO" id="GO:0032981">
    <property type="term" value="P:mitochondrial respiratory chain complex I assembly"/>
    <property type="evidence" value="ECO:0000315"/>
    <property type="project" value="UniProtKB"/>
</dbReference>
<dbReference type="InterPro" id="IPR009622">
    <property type="entry name" value="NDUFAF4"/>
</dbReference>
<dbReference type="PANTHER" id="PTHR13338:SF6">
    <property type="entry name" value="NADH DEHYDROGENASE [UBIQUINONE] 1 ALPHA SUBCOMPLEX ASSEMBLY FACTOR 4"/>
    <property type="match status" value="1"/>
</dbReference>
<dbReference type="PANTHER" id="PTHR13338">
    <property type="entry name" value="UPF0240 PROTEIN"/>
    <property type="match status" value="1"/>
</dbReference>
<dbReference type="Pfam" id="PF06784">
    <property type="entry name" value="UPF0240"/>
    <property type="match status" value="1"/>
</dbReference>